<reference key="1">
    <citation type="journal article" date="1994" name="J. Bacteriol.">
        <title>Two different dihydroorotate dehydrogenases in Lactococcus lactis.</title>
        <authorList>
            <person name="Andersen P.S."/>
            <person name="Jansen P.J.G."/>
            <person name="Hammer K."/>
        </authorList>
    </citation>
    <scope>NUCLEOTIDE SEQUENCE [GENOMIC DNA]</scope>
    <scope>FUNCTION</scope>
    <scope>CATALYTIC ACTIVITY</scope>
    <scope>SUBSTRATE SPECIFICITY</scope>
    <source>
        <strain>MG1363</strain>
    </source>
</reference>
<reference key="2">
    <citation type="journal article" date="1996" name="J. Bacteriol.">
        <title>Sequence analysis and identification of the pyrKDbF operon from Lactococcus lactis including a novel gene, pyrK, involved in pyrimidine biosynthesis.</title>
        <authorList>
            <person name="Andersen P.S."/>
            <person name="Martinussen J."/>
            <person name="Hammer K."/>
        </authorList>
    </citation>
    <scope>NUCLEOTIDE SEQUENCE [GENOMIC DNA]</scope>
    <source>
        <strain>MG1363</strain>
    </source>
</reference>
<reference key="3">
    <citation type="journal article" date="2007" name="J. Bacteriol.">
        <title>The complete genome sequence of the lactic acid bacterial paradigm Lactococcus lactis subsp. cremoris MG1363.</title>
        <authorList>
            <person name="Wegmann U."/>
            <person name="O'Connell-Motherway M."/>
            <person name="Zomer A."/>
            <person name="Buist G."/>
            <person name="Shearman C."/>
            <person name="Canchaya C."/>
            <person name="Ventura M."/>
            <person name="Goesmann A."/>
            <person name="Gasson M.J."/>
            <person name="Kuipers O.P."/>
            <person name="van Sinderen D."/>
            <person name="Kok J."/>
        </authorList>
    </citation>
    <scope>NUCLEOTIDE SEQUENCE [LARGE SCALE GENOMIC DNA]</scope>
    <source>
        <strain>MG1363</strain>
    </source>
</reference>
<reference key="4">
    <citation type="journal article" date="1996" name="J. Biol. Chem.">
        <title>The B form of dihydroorotate dehydrogenase from Lactococcus lactis consists of two different subunits, encoded by the pyrDb and pyrK genes, and contains FMN, FAD, and [FeS] redox centers.</title>
        <authorList>
            <person name="Nielsen F.S."/>
            <person name="Andersen P.S."/>
            <person name="Jensen K.F."/>
        </authorList>
    </citation>
    <scope>CATALYTIC ACTIVITY</scope>
    <scope>COFACTOR</scope>
    <scope>SUBUNIT</scope>
    <scope>BIOPHYSICOCHEMICAL PROPERTIES</scope>
    <source>
        <strain>MG1363</strain>
    </source>
</reference>
<reference key="5">
    <citation type="journal article" date="2000" name="Structure">
        <title>Structure of dihydroorotate dehydrogenase B: electron transfer between two flavin groups bridged by an iron-sulphur cluster.</title>
        <authorList>
            <person name="Rowland P."/>
            <person name="Noerager S."/>
            <person name="Jensen K.F."/>
            <person name="Larsen S."/>
        </authorList>
    </citation>
    <scope>X-RAY CRYSTALLOGRAPHY (2.1 ANGSTROMS) IN COMPLEXES WITH FMN AND OROTATE</scope>
    <scope>COFACTOR</scope>
    <scope>REACTION MECHANISM</scope>
    <source>
        <strain>MG1363</strain>
    </source>
</reference>
<proteinExistence type="evidence at protein level"/>
<comment type="function">
    <text evidence="2">Catalyzes the conversion of dihydroorotate to orotate with NAD(+) as electron acceptor. Cannot use fumarate as an electron acceptor.</text>
</comment>
<comment type="catalytic activity">
    <reaction evidence="2 3">
        <text>(S)-dihydroorotate + NAD(+) = orotate + NADH + H(+)</text>
        <dbReference type="Rhea" id="RHEA:13513"/>
        <dbReference type="ChEBI" id="CHEBI:15378"/>
        <dbReference type="ChEBI" id="CHEBI:30839"/>
        <dbReference type="ChEBI" id="CHEBI:30864"/>
        <dbReference type="ChEBI" id="CHEBI:57540"/>
        <dbReference type="ChEBI" id="CHEBI:57945"/>
        <dbReference type="EC" id="1.3.1.14"/>
    </reaction>
</comment>
<comment type="cofactor">
    <cofactor evidence="1 3">
        <name>FMN</name>
        <dbReference type="ChEBI" id="CHEBI:58210"/>
    </cofactor>
    <text evidence="1 3">Binds 1 FMN per subunit.</text>
</comment>
<comment type="biophysicochemical properties">
    <kinetics>
        <KM evidence="3">28 uM for orotate</KM>
        <KM evidence="3">111 uM for NAD(+)</KM>
    </kinetics>
    <phDependence>
        <text evidence="3">Optimum pH is 8.</text>
    </phDependence>
</comment>
<comment type="pathway">
    <text>Pyrimidine metabolism; UMP biosynthesis via de novo pathway; orotate from (S)-dihydroorotate (NAD(+) route): step 1/1.</text>
</comment>
<comment type="subunit">
    <text evidence="3">Heterotetramer of 2 PyrK and 2 PyrD type B subunits.</text>
</comment>
<comment type="interaction">
    <interactant intactId="EBI-1030598">
        <id>P54322</id>
    </interactant>
    <interactant intactId="EBI-1030589">
        <id>P56968</id>
        <label>pyrK</label>
    </interactant>
    <organismsDiffer>false</organismsDiffer>
    <experiments>3</experiments>
</comment>
<comment type="subcellular location">
    <subcellularLocation>
        <location>Cytoplasm</location>
    </subcellularLocation>
</comment>
<comment type="similarity">
    <text evidence="4">Belongs to the dihydroorotate dehydrogenase family. Type 1 subfamily.</text>
</comment>
<keyword id="KW-0002">3D-structure</keyword>
<keyword id="KW-0963">Cytoplasm</keyword>
<keyword id="KW-0285">Flavoprotein</keyword>
<keyword id="KW-0288">FMN</keyword>
<keyword id="KW-0520">NAD</keyword>
<keyword id="KW-0560">Oxidoreductase</keyword>
<keyword id="KW-0665">Pyrimidine biosynthesis</keyword>
<organism>
    <name type="scientific">Lactococcus lactis subsp. cremoris (strain MG1363)</name>
    <dbReference type="NCBI Taxonomy" id="416870"/>
    <lineage>
        <taxon>Bacteria</taxon>
        <taxon>Bacillati</taxon>
        <taxon>Bacillota</taxon>
        <taxon>Bacilli</taxon>
        <taxon>Lactobacillales</taxon>
        <taxon>Streptococcaceae</taxon>
        <taxon>Lactococcus</taxon>
        <taxon>Lactococcus cremoris subsp. cremoris</taxon>
    </lineage>
</organism>
<dbReference type="EC" id="1.3.1.14"/>
<dbReference type="EMBL" id="X74207">
    <property type="protein sequence ID" value="CAA52280.1"/>
    <property type="molecule type" value="Genomic_DNA"/>
</dbReference>
<dbReference type="EMBL" id="AM406671">
    <property type="protein sequence ID" value="CAL97700.1"/>
    <property type="molecule type" value="Genomic_DNA"/>
</dbReference>
<dbReference type="RefSeq" id="WP_011835014.1">
    <property type="nucleotide sequence ID" value="NC_009004.1"/>
</dbReference>
<dbReference type="PDB" id="1EP1">
    <property type="method" value="X-ray"/>
    <property type="resolution" value="2.20 A"/>
    <property type="chains" value="A=1-311"/>
</dbReference>
<dbReference type="PDB" id="1EP2">
    <property type="method" value="X-ray"/>
    <property type="resolution" value="2.40 A"/>
    <property type="chains" value="A=1-311"/>
</dbReference>
<dbReference type="PDB" id="1EP3">
    <property type="method" value="X-ray"/>
    <property type="resolution" value="2.10 A"/>
    <property type="chains" value="A=1-311"/>
</dbReference>
<dbReference type="PDBsum" id="1EP1"/>
<dbReference type="PDBsum" id="1EP2"/>
<dbReference type="PDBsum" id="1EP3"/>
<dbReference type="SMR" id="P54322"/>
<dbReference type="IntAct" id="P54322">
    <property type="interactions" value="1"/>
</dbReference>
<dbReference type="MINT" id="P54322"/>
<dbReference type="STRING" id="416870.llmg_1106"/>
<dbReference type="KEGG" id="llm:llmg_1106"/>
<dbReference type="eggNOG" id="COG0167">
    <property type="taxonomic scope" value="Bacteria"/>
</dbReference>
<dbReference type="HOGENOM" id="CLU_042042_0_0_9"/>
<dbReference type="OrthoDB" id="9794954at2"/>
<dbReference type="PhylomeDB" id="P54322"/>
<dbReference type="UniPathway" id="UPA00070">
    <property type="reaction ID" value="UER00945"/>
</dbReference>
<dbReference type="EvolutionaryTrace" id="P54322"/>
<dbReference type="Proteomes" id="UP000000364">
    <property type="component" value="Chromosome"/>
</dbReference>
<dbReference type="GO" id="GO:0005737">
    <property type="term" value="C:cytoplasm"/>
    <property type="evidence" value="ECO:0007669"/>
    <property type="project" value="UniProtKB-SubCell"/>
</dbReference>
<dbReference type="GO" id="GO:0004589">
    <property type="term" value="F:dihydroorotate dehydrogenase (NAD+) activity"/>
    <property type="evidence" value="ECO:0007669"/>
    <property type="project" value="UniProtKB-EC"/>
</dbReference>
<dbReference type="GO" id="GO:0006207">
    <property type="term" value="P:'de novo' pyrimidine nucleobase biosynthetic process"/>
    <property type="evidence" value="ECO:0007669"/>
    <property type="project" value="InterPro"/>
</dbReference>
<dbReference type="GO" id="GO:0044205">
    <property type="term" value="P:'de novo' UMP biosynthetic process"/>
    <property type="evidence" value="ECO:0007669"/>
    <property type="project" value="UniProtKB-UniRule"/>
</dbReference>
<dbReference type="CDD" id="cd04740">
    <property type="entry name" value="DHOD_1B_like"/>
    <property type="match status" value="1"/>
</dbReference>
<dbReference type="FunFam" id="3.20.20.70:FF:000069">
    <property type="entry name" value="Dihydroorotate dehydrogenase"/>
    <property type="match status" value="1"/>
</dbReference>
<dbReference type="Gene3D" id="3.20.20.70">
    <property type="entry name" value="Aldolase class I"/>
    <property type="match status" value="1"/>
</dbReference>
<dbReference type="HAMAP" id="MF_00224">
    <property type="entry name" value="DHO_dh_type1"/>
    <property type="match status" value="1"/>
</dbReference>
<dbReference type="InterPro" id="IPR013785">
    <property type="entry name" value="Aldolase_TIM"/>
</dbReference>
<dbReference type="InterPro" id="IPR050074">
    <property type="entry name" value="DHO_dehydrogenase"/>
</dbReference>
<dbReference type="InterPro" id="IPR033888">
    <property type="entry name" value="DHOD_1B"/>
</dbReference>
<dbReference type="InterPro" id="IPR024920">
    <property type="entry name" value="Dihydroorotate_DH_1"/>
</dbReference>
<dbReference type="InterPro" id="IPR012135">
    <property type="entry name" value="Dihydroorotate_DH_1_2"/>
</dbReference>
<dbReference type="InterPro" id="IPR005720">
    <property type="entry name" value="Dihydroorotate_DH_cat"/>
</dbReference>
<dbReference type="InterPro" id="IPR001295">
    <property type="entry name" value="Dihydroorotate_DH_CS"/>
</dbReference>
<dbReference type="InterPro" id="IPR049622">
    <property type="entry name" value="Dihydroorotate_DH_I"/>
</dbReference>
<dbReference type="NCBIfam" id="NF005574">
    <property type="entry name" value="PRK07259.1"/>
    <property type="match status" value="1"/>
</dbReference>
<dbReference type="NCBIfam" id="TIGR01037">
    <property type="entry name" value="pyrD_sub1_fam"/>
    <property type="match status" value="1"/>
</dbReference>
<dbReference type="PANTHER" id="PTHR48109:SF1">
    <property type="entry name" value="DIHYDROOROTATE DEHYDROGENASE (FUMARATE)"/>
    <property type="match status" value="1"/>
</dbReference>
<dbReference type="PANTHER" id="PTHR48109">
    <property type="entry name" value="DIHYDROOROTATE DEHYDROGENASE (QUINONE), MITOCHONDRIAL-RELATED"/>
    <property type="match status" value="1"/>
</dbReference>
<dbReference type="Pfam" id="PF01180">
    <property type="entry name" value="DHO_dh"/>
    <property type="match status" value="1"/>
</dbReference>
<dbReference type="PIRSF" id="PIRSF000164">
    <property type="entry name" value="DHO_oxidase"/>
    <property type="match status" value="1"/>
</dbReference>
<dbReference type="SUPFAM" id="SSF51395">
    <property type="entry name" value="FMN-linked oxidoreductases"/>
    <property type="match status" value="1"/>
</dbReference>
<dbReference type="PROSITE" id="PS00911">
    <property type="entry name" value="DHODEHASE_1"/>
    <property type="match status" value="1"/>
</dbReference>
<dbReference type="PROSITE" id="PS00912">
    <property type="entry name" value="DHODEHASE_2"/>
    <property type="match status" value="1"/>
</dbReference>
<accession>P54322</accession>
<accession>A2RK90</accession>
<evidence type="ECO:0000269" key="1">
    <source>
    </source>
</evidence>
<evidence type="ECO:0000269" key="2">
    <source>
    </source>
</evidence>
<evidence type="ECO:0000269" key="3">
    <source>
    </source>
</evidence>
<evidence type="ECO:0000305" key="4"/>
<evidence type="ECO:0007829" key="5">
    <source>
        <dbReference type="PDB" id="1EP1"/>
    </source>
</evidence>
<evidence type="ECO:0007829" key="6">
    <source>
        <dbReference type="PDB" id="1EP3"/>
    </source>
</evidence>
<sequence>MTENNRLSVKLPGLDLKNPIIPASGCFGFGEEYAKYYDLNKLGSIMVKATTLHPRFGNPTPRVAETASGMLNAIGLQNPGLEVIMTEKLPWLNENFPELPIIANVAGSEEADYVAVCAKIGDAANVKAIELNISCPNVKHGGQAFGTDPEVAAALVKACKAVSKVPLYVKLSPNVTDIVPIAKAVEAAGADGLTMINTLMGVRFDLKTRQPILANITGGLSGPAIKPVALKLIHQVAQVVDIPIIGMGGVANAQDVLEMYMAGASAVAVGTANFADPFVCPKIIDKLPELMDQYRIESLESLIQEVKEGKK</sequence>
<protein>
    <recommendedName>
        <fullName>Dihydroorotate dehydrogenase B (NAD(+)), catalytic subunit</fullName>
        <shortName>DHOD B</shortName>
        <shortName>DHODase B</shortName>
        <shortName>DHOdehase B</shortName>
        <ecNumber>1.3.1.14</ecNumber>
    </recommendedName>
    <alternativeName>
        <fullName>Dihydroorotate oxidase B</fullName>
    </alternativeName>
    <alternativeName>
        <fullName>Orotate reductase (NADH)</fullName>
    </alternativeName>
</protein>
<feature type="chain" id="PRO_0000148396" description="Dihydroorotate dehydrogenase B (NAD(+)), catalytic subunit">
    <location>
        <begin position="1"/>
        <end position="311"/>
    </location>
</feature>
<feature type="active site" description="Nucleophile">
    <location>
        <position position="135"/>
    </location>
</feature>
<feature type="binding site">
    <location>
        <position position="24"/>
    </location>
    <ligand>
        <name>FMN</name>
        <dbReference type="ChEBI" id="CHEBI:58210"/>
    </ligand>
</feature>
<feature type="binding site">
    <location>
        <begin position="48"/>
        <end position="49"/>
    </location>
    <ligand>
        <name>FMN</name>
        <dbReference type="ChEBI" id="CHEBI:58210"/>
    </ligand>
</feature>
<feature type="binding site">
    <location>
        <position position="48"/>
    </location>
    <ligand>
        <name>substrate</name>
    </ligand>
</feature>
<feature type="binding site">
    <location>
        <begin position="72"/>
        <end position="76"/>
    </location>
    <ligand>
        <name>substrate</name>
    </ligand>
</feature>
<feature type="binding site">
    <location>
        <position position="104"/>
    </location>
    <ligand>
        <name>FMN</name>
        <dbReference type="ChEBI" id="CHEBI:58210"/>
    </ligand>
</feature>
<feature type="binding site">
    <location>
        <position position="132"/>
    </location>
    <ligand>
        <name>FMN</name>
        <dbReference type="ChEBI" id="CHEBI:58210"/>
    </ligand>
</feature>
<feature type="binding site">
    <location>
        <position position="132"/>
    </location>
    <ligand>
        <name>substrate</name>
    </ligand>
</feature>
<feature type="binding site">
    <location>
        <position position="170"/>
    </location>
    <ligand>
        <name>FMN</name>
        <dbReference type="ChEBI" id="CHEBI:58210"/>
    </ligand>
</feature>
<feature type="binding site">
    <location>
        <position position="196"/>
    </location>
    <ligand>
        <name>FMN</name>
        <dbReference type="ChEBI" id="CHEBI:58210"/>
    </ligand>
</feature>
<feature type="binding site">
    <location>
        <begin position="197"/>
        <end position="198"/>
    </location>
    <ligand>
        <name>substrate</name>
    </ligand>
</feature>
<feature type="binding site">
    <location>
        <position position="222"/>
    </location>
    <ligand>
        <name>FMN</name>
        <dbReference type="ChEBI" id="CHEBI:58210"/>
    </ligand>
</feature>
<feature type="binding site">
    <location>
        <begin position="248"/>
        <end position="249"/>
    </location>
    <ligand>
        <name>FMN</name>
        <dbReference type="ChEBI" id="CHEBI:58210"/>
    </ligand>
</feature>
<feature type="binding site">
    <location>
        <begin position="270"/>
        <end position="271"/>
    </location>
    <ligand>
        <name>FMN</name>
        <dbReference type="ChEBI" id="CHEBI:58210"/>
    </ligand>
</feature>
<feature type="sequence conflict" description="In Ref. 1; CAA52280 and 2." evidence="4" ref="1 2">
    <original>A</original>
    <variation>R</variation>
    <location>
        <position position="123"/>
    </location>
</feature>
<feature type="sequence conflict" description="In Ref. 1; CAA52280 and 2." evidence="4" ref="1 2">
    <original>V</original>
    <variation>D</variation>
    <location>
        <position position="239"/>
    </location>
</feature>
<feature type="sequence conflict" description="In Ref. 1; CAA52280 and 2." evidence="4" ref="1 2">
    <original>D</original>
    <variation>V</variation>
    <location>
        <position position="255"/>
    </location>
</feature>
<feature type="sequence conflict" description="In Ref. 1; CAA52280 and 2." evidence="4" ref="1 2">
    <original>A</original>
    <variation>R</variation>
    <location>
        <position position="266"/>
    </location>
</feature>
<feature type="turn" evidence="6">
    <location>
        <begin position="5"/>
        <end position="7"/>
    </location>
</feature>
<feature type="strand" evidence="6">
    <location>
        <begin position="9"/>
        <end position="11"/>
    </location>
</feature>
<feature type="strand" evidence="6">
    <location>
        <begin position="14"/>
        <end position="22"/>
    </location>
</feature>
<feature type="helix" evidence="6">
    <location>
        <begin position="33"/>
        <end position="35"/>
    </location>
</feature>
<feature type="helix" evidence="6">
    <location>
        <begin position="39"/>
        <end position="41"/>
    </location>
</feature>
<feature type="strand" evidence="6">
    <location>
        <begin position="45"/>
        <end position="50"/>
    </location>
</feature>
<feature type="strand" evidence="6">
    <location>
        <begin position="63"/>
        <end position="66"/>
    </location>
</feature>
<feature type="strand" evidence="6">
    <location>
        <begin position="69"/>
        <end position="72"/>
    </location>
</feature>
<feature type="helix" evidence="6">
    <location>
        <begin position="81"/>
        <end position="86"/>
    </location>
</feature>
<feature type="helix" evidence="6">
    <location>
        <begin position="88"/>
        <end position="95"/>
    </location>
</feature>
<feature type="strand" evidence="6">
    <location>
        <begin position="101"/>
        <end position="105"/>
    </location>
</feature>
<feature type="helix" evidence="6">
    <location>
        <begin position="110"/>
        <end position="120"/>
    </location>
</feature>
<feature type="strand" evidence="6">
    <location>
        <begin position="126"/>
        <end position="132"/>
    </location>
</feature>
<feature type="strand" evidence="5">
    <location>
        <begin position="135"/>
        <end position="137"/>
    </location>
</feature>
<feature type="helix" evidence="6">
    <location>
        <begin position="138"/>
        <end position="140"/>
    </location>
</feature>
<feature type="helix" evidence="6">
    <location>
        <begin position="145"/>
        <end position="147"/>
    </location>
</feature>
<feature type="helix" evidence="6">
    <location>
        <begin position="149"/>
        <end position="162"/>
    </location>
</feature>
<feature type="strand" evidence="6">
    <location>
        <begin position="167"/>
        <end position="171"/>
    </location>
</feature>
<feature type="helix" evidence="6">
    <location>
        <begin position="179"/>
        <end position="187"/>
    </location>
</feature>
<feature type="strand" evidence="6">
    <location>
        <begin position="191"/>
        <end position="195"/>
    </location>
</feature>
<feature type="strand" evidence="6">
    <location>
        <begin position="199"/>
        <end position="201"/>
    </location>
</feature>
<feature type="turn" evidence="6">
    <location>
        <begin position="206"/>
        <end position="208"/>
    </location>
</feature>
<feature type="strand" evidence="6">
    <location>
        <begin position="210"/>
        <end position="213"/>
    </location>
</feature>
<feature type="strand" evidence="6">
    <location>
        <begin position="218"/>
        <end position="222"/>
    </location>
</feature>
<feature type="helix" evidence="6">
    <location>
        <begin position="223"/>
        <end position="225"/>
    </location>
</feature>
<feature type="helix" evidence="6">
    <location>
        <begin position="226"/>
        <end position="237"/>
    </location>
</feature>
<feature type="strand" evidence="6">
    <location>
        <begin position="244"/>
        <end position="246"/>
    </location>
</feature>
<feature type="helix" evidence="6">
    <location>
        <begin position="253"/>
        <end position="262"/>
    </location>
</feature>
<feature type="strand" evidence="6">
    <location>
        <begin position="265"/>
        <end position="269"/>
    </location>
</feature>
<feature type="helix" evidence="6">
    <location>
        <begin position="272"/>
        <end position="275"/>
    </location>
</feature>
<feature type="helix" evidence="6">
    <location>
        <begin position="279"/>
        <end position="293"/>
    </location>
</feature>
<feature type="helix" evidence="6">
    <location>
        <begin position="299"/>
        <end position="308"/>
    </location>
</feature>
<gene>
    <name type="primary">pyrDB</name>
    <name type="ordered locus">llmg_1106</name>
</gene>
<name>PYRDB_LACLM</name>